<reference key="1">
    <citation type="submission" date="2005-07" db="EMBL/GenBank/DDBJ databases">
        <title>Complete sequence of Synechococcus sp. CC9605.</title>
        <authorList>
            <consortium name="US DOE Joint Genome Institute"/>
            <person name="Copeland A."/>
            <person name="Lucas S."/>
            <person name="Lapidus A."/>
            <person name="Barry K."/>
            <person name="Detter J.C."/>
            <person name="Glavina T."/>
            <person name="Hammon N."/>
            <person name="Israni S."/>
            <person name="Pitluck S."/>
            <person name="Schmutz J."/>
            <person name="Martinez M."/>
            <person name="Larimer F."/>
            <person name="Land M."/>
            <person name="Kyrpides N."/>
            <person name="Ivanova N."/>
            <person name="Richardson P."/>
        </authorList>
    </citation>
    <scope>NUCLEOTIDE SEQUENCE [LARGE SCALE GENOMIC DNA]</scope>
    <source>
        <strain>CC9605</strain>
    </source>
</reference>
<sequence>MTYTRVLLKLSGEALMGSQGYGIDPAIVQSIASDVAKVVANGTQLAIVVGGGNIFRGLKGSAAGMERATADYVGMLATVMNAITLQDGLERAGVPTRVQTAIAMQEVAEPYIRRKAIRHLEKNRVVVFGAGCGNPFFTTDTTAALRAAEINADVVFKATKVDGVYDKDPAKHADAVKHPQLSYQDVLSGELGVMDSTAIALCKDNNIPIVVFNLFEPGNIGRAVAGEPIGSRIGDPA</sequence>
<dbReference type="EC" id="2.7.4.22" evidence="1"/>
<dbReference type="EMBL" id="CP000110">
    <property type="protein sequence ID" value="ABB34485.1"/>
    <property type="molecule type" value="Genomic_DNA"/>
</dbReference>
<dbReference type="RefSeq" id="WP_011363713.1">
    <property type="nucleotide sequence ID" value="NC_007516.1"/>
</dbReference>
<dbReference type="SMR" id="Q3ALP7"/>
<dbReference type="STRING" id="110662.Syncc9605_0711"/>
<dbReference type="KEGG" id="syd:Syncc9605_0711"/>
<dbReference type="eggNOG" id="COG0528">
    <property type="taxonomic scope" value="Bacteria"/>
</dbReference>
<dbReference type="HOGENOM" id="CLU_033861_0_0_3"/>
<dbReference type="OrthoDB" id="9807458at2"/>
<dbReference type="UniPathway" id="UPA00159">
    <property type="reaction ID" value="UER00275"/>
</dbReference>
<dbReference type="GO" id="GO:0005737">
    <property type="term" value="C:cytoplasm"/>
    <property type="evidence" value="ECO:0007669"/>
    <property type="project" value="UniProtKB-SubCell"/>
</dbReference>
<dbReference type="GO" id="GO:0005524">
    <property type="term" value="F:ATP binding"/>
    <property type="evidence" value="ECO:0007669"/>
    <property type="project" value="UniProtKB-KW"/>
</dbReference>
<dbReference type="GO" id="GO:0033862">
    <property type="term" value="F:UMP kinase activity"/>
    <property type="evidence" value="ECO:0007669"/>
    <property type="project" value="UniProtKB-EC"/>
</dbReference>
<dbReference type="GO" id="GO:0044210">
    <property type="term" value="P:'de novo' CTP biosynthetic process"/>
    <property type="evidence" value="ECO:0007669"/>
    <property type="project" value="UniProtKB-UniRule"/>
</dbReference>
<dbReference type="GO" id="GO:0006225">
    <property type="term" value="P:UDP biosynthetic process"/>
    <property type="evidence" value="ECO:0007669"/>
    <property type="project" value="TreeGrafter"/>
</dbReference>
<dbReference type="CDD" id="cd04254">
    <property type="entry name" value="AAK_UMPK-PyrH-Ec"/>
    <property type="match status" value="1"/>
</dbReference>
<dbReference type="FunFam" id="3.40.1160.10:FF:000001">
    <property type="entry name" value="Uridylate kinase"/>
    <property type="match status" value="1"/>
</dbReference>
<dbReference type="Gene3D" id="3.40.1160.10">
    <property type="entry name" value="Acetylglutamate kinase-like"/>
    <property type="match status" value="1"/>
</dbReference>
<dbReference type="HAMAP" id="MF_01220_B">
    <property type="entry name" value="PyrH_B"/>
    <property type="match status" value="1"/>
</dbReference>
<dbReference type="InterPro" id="IPR036393">
    <property type="entry name" value="AceGlu_kinase-like_sf"/>
</dbReference>
<dbReference type="InterPro" id="IPR001048">
    <property type="entry name" value="Asp/Glu/Uridylate_kinase"/>
</dbReference>
<dbReference type="InterPro" id="IPR011817">
    <property type="entry name" value="Uridylate_kinase"/>
</dbReference>
<dbReference type="InterPro" id="IPR015963">
    <property type="entry name" value="Uridylate_kinase_bac"/>
</dbReference>
<dbReference type="NCBIfam" id="TIGR02075">
    <property type="entry name" value="pyrH_bact"/>
    <property type="match status" value="1"/>
</dbReference>
<dbReference type="PANTHER" id="PTHR42833">
    <property type="entry name" value="URIDYLATE KINASE"/>
    <property type="match status" value="1"/>
</dbReference>
<dbReference type="PANTHER" id="PTHR42833:SF4">
    <property type="entry name" value="URIDYLATE KINASE PUMPKIN, CHLOROPLASTIC"/>
    <property type="match status" value="1"/>
</dbReference>
<dbReference type="Pfam" id="PF00696">
    <property type="entry name" value="AA_kinase"/>
    <property type="match status" value="1"/>
</dbReference>
<dbReference type="PIRSF" id="PIRSF005650">
    <property type="entry name" value="Uridylate_kin"/>
    <property type="match status" value="1"/>
</dbReference>
<dbReference type="SUPFAM" id="SSF53633">
    <property type="entry name" value="Carbamate kinase-like"/>
    <property type="match status" value="1"/>
</dbReference>
<protein>
    <recommendedName>
        <fullName evidence="1">Uridylate kinase</fullName>
        <shortName evidence="1">UK</shortName>
        <ecNumber evidence="1">2.7.4.22</ecNumber>
    </recommendedName>
    <alternativeName>
        <fullName evidence="1">Uridine monophosphate kinase</fullName>
        <shortName evidence="1">UMP kinase</shortName>
        <shortName evidence="1">UMPK</shortName>
    </alternativeName>
</protein>
<proteinExistence type="inferred from homology"/>
<organism>
    <name type="scientific">Synechococcus sp. (strain CC9605)</name>
    <dbReference type="NCBI Taxonomy" id="110662"/>
    <lineage>
        <taxon>Bacteria</taxon>
        <taxon>Bacillati</taxon>
        <taxon>Cyanobacteriota</taxon>
        <taxon>Cyanophyceae</taxon>
        <taxon>Synechococcales</taxon>
        <taxon>Synechococcaceae</taxon>
        <taxon>Synechococcus</taxon>
    </lineage>
</organism>
<evidence type="ECO:0000255" key="1">
    <source>
        <dbReference type="HAMAP-Rule" id="MF_01220"/>
    </source>
</evidence>
<comment type="function">
    <text evidence="1">Catalyzes the reversible phosphorylation of UMP to UDP.</text>
</comment>
<comment type="catalytic activity">
    <reaction evidence="1">
        <text>UMP + ATP = UDP + ADP</text>
        <dbReference type="Rhea" id="RHEA:24400"/>
        <dbReference type="ChEBI" id="CHEBI:30616"/>
        <dbReference type="ChEBI" id="CHEBI:57865"/>
        <dbReference type="ChEBI" id="CHEBI:58223"/>
        <dbReference type="ChEBI" id="CHEBI:456216"/>
        <dbReference type="EC" id="2.7.4.22"/>
    </reaction>
</comment>
<comment type="activity regulation">
    <text evidence="1">Allosterically activated by GTP. Inhibited by UTP.</text>
</comment>
<comment type="pathway">
    <text evidence="1">Pyrimidine metabolism; CTP biosynthesis via de novo pathway; UDP from UMP (UMPK route): step 1/1.</text>
</comment>
<comment type="subunit">
    <text evidence="1">Homohexamer.</text>
</comment>
<comment type="subcellular location">
    <subcellularLocation>
        <location evidence="1">Cytoplasm</location>
    </subcellularLocation>
</comment>
<comment type="similarity">
    <text evidence="1">Belongs to the UMP kinase family.</text>
</comment>
<accession>Q3ALP7</accession>
<feature type="chain" id="PRO_0000323964" description="Uridylate kinase">
    <location>
        <begin position="1"/>
        <end position="237"/>
    </location>
</feature>
<feature type="region of interest" description="Involved in allosteric activation by GTP" evidence="1">
    <location>
        <begin position="17"/>
        <end position="22"/>
    </location>
</feature>
<feature type="binding site" evidence="1">
    <location>
        <begin position="9"/>
        <end position="12"/>
    </location>
    <ligand>
        <name>ATP</name>
        <dbReference type="ChEBI" id="CHEBI:30616"/>
    </ligand>
</feature>
<feature type="binding site" evidence="1">
    <location>
        <position position="51"/>
    </location>
    <ligand>
        <name>UMP</name>
        <dbReference type="ChEBI" id="CHEBI:57865"/>
    </ligand>
</feature>
<feature type="binding site" evidence="1">
    <location>
        <position position="52"/>
    </location>
    <ligand>
        <name>ATP</name>
        <dbReference type="ChEBI" id="CHEBI:30616"/>
    </ligand>
</feature>
<feature type="binding site" evidence="1">
    <location>
        <position position="56"/>
    </location>
    <ligand>
        <name>ATP</name>
        <dbReference type="ChEBI" id="CHEBI:30616"/>
    </ligand>
</feature>
<feature type="binding site" evidence="1">
    <location>
        <position position="71"/>
    </location>
    <ligand>
        <name>UMP</name>
        <dbReference type="ChEBI" id="CHEBI:57865"/>
    </ligand>
</feature>
<feature type="binding site" evidence="1">
    <location>
        <begin position="132"/>
        <end position="139"/>
    </location>
    <ligand>
        <name>UMP</name>
        <dbReference type="ChEBI" id="CHEBI:57865"/>
    </ligand>
</feature>
<feature type="binding site" evidence="1">
    <location>
        <position position="159"/>
    </location>
    <ligand>
        <name>ATP</name>
        <dbReference type="ChEBI" id="CHEBI:30616"/>
    </ligand>
</feature>
<feature type="binding site" evidence="1">
    <location>
        <position position="165"/>
    </location>
    <ligand>
        <name>ATP</name>
        <dbReference type="ChEBI" id="CHEBI:30616"/>
    </ligand>
</feature>
<feature type="binding site" evidence="1">
    <location>
        <position position="168"/>
    </location>
    <ligand>
        <name>ATP</name>
        <dbReference type="ChEBI" id="CHEBI:30616"/>
    </ligand>
</feature>
<keyword id="KW-0021">Allosteric enzyme</keyword>
<keyword id="KW-0067">ATP-binding</keyword>
<keyword id="KW-0963">Cytoplasm</keyword>
<keyword id="KW-0418">Kinase</keyword>
<keyword id="KW-0547">Nucleotide-binding</keyword>
<keyword id="KW-0665">Pyrimidine biosynthesis</keyword>
<keyword id="KW-0808">Transferase</keyword>
<name>PYRH_SYNSC</name>
<gene>
    <name evidence="1" type="primary">pyrH</name>
    <name type="ordered locus">Syncc9605_0711</name>
</gene>